<gene>
    <name evidence="1" type="primary">hisH</name>
    <name type="ordered locus">SA2467</name>
</gene>
<sequence>MIVIVDYGLGNISNVKRAIEHLGYEVVVSNTSKIIDQAETIILPGVGHFKDAMSEIKRLNLNAILAKNTDKKMIGICLGMQLMYEHSDEGDASGLGFIPGNISRIQTEYPVPHLGWNNLVSKHPMLNQDVYFVHSYQAPMSENVIAYAQYGADIPAIVQFNNYIGIQFHPEKSGTYGLQILRQAIQGGFIND</sequence>
<reference key="1">
    <citation type="journal article" date="2001" name="Lancet">
        <title>Whole genome sequencing of meticillin-resistant Staphylococcus aureus.</title>
        <authorList>
            <person name="Kuroda M."/>
            <person name="Ohta T."/>
            <person name="Uchiyama I."/>
            <person name="Baba T."/>
            <person name="Yuzawa H."/>
            <person name="Kobayashi I."/>
            <person name="Cui L."/>
            <person name="Oguchi A."/>
            <person name="Aoki K."/>
            <person name="Nagai Y."/>
            <person name="Lian J.-Q."/>
            <person name="Ito T."/>
            <person name="Kanamori M."/>
            <person name="Matsumaru H."/>
            <person name="Maruyama A."/>
            <person name="Murakami H."/>
            <person name="Hosoyama A."/>
            <person name="Mizutani-Ui Y."/>
            <person name="Takahashi N.K."/>
            <person name="Sawano T."/>
            <person name="Inoue R."/>
            <person name="Kaito C."/>
            <person name="Sekimizu K."/>
            <person name="Hirakawa H."/>
            <person name="Kuhara S."/>
            <person name="Goto S."/>
            <person name="Yabuzaki J."/>
            <person name="Kanehisa M."/>
            <person name="Yamashita A."/>
            <person name="Oshima K."/>
            <person name="Furuya K."/>
            <person name="Yoshino C."/>
            <person name="Shiba T."/>
            <person name="Hattori M."/>
            <person name="Ogasawara N."/>
            <person name="Hayashi H."/>
            <person name="Hiramatsu K."/>
        </authorList>
    </citation>
    <scope>NUCLEOTIDE SEQUENCE [LARGE SCALE GENOMIC DNA]</scope>
    <source>
        <strain>N315</strain>
    </source>
</reference>
<dbReference type="EC" id="4.3.2.10" evidence="1"/>
<dbReference type="EC" id="3.5.1.2" evidence="1"/>
<dbReference type="EMBL" id="BA000018">
    <property type="protein sequence ID" value="BAB43773.1"/>
    <property type="molecule type" value="Genomic_DNA"/>
</dbReference>
<dbReference type="PIR" id="C90076">
    <property type="entry name" value="C90076"/>
</dbReference>
<dbReference type="RefSeq" id="WP_000635623.1">
    <property type="nucleotide sequence ID" value="NC_002745.2"/>
</dbReference>
<dbReference type="SMR" id="P64364"/>
<dbReference type="EnsemblBacteria" id="BAB43773">
    <property type="protein sequence ID" value="BAB43773"/>
    <property type="gene ID" value="BAB43773"/>
</dbReference>
<dbReference type="KEGG" id="sau:SA2467"/>
<dbReference type="HOGENOM" id="CLU_071837_2_2_9"/>
<dbReference type="UniPathway" id="UPA00031">
    <property type="reaction ID" value="UER00010"/>
</dbReference>
<dbReference type="GO" id="GO:0005737">
    <property type="term" value="C:cytoplasm"/>
    <property type="evidence" value="ECO:0007669"/>
    <property type="project" value="UniProtKB-SubCell"/>
</dbReference>
<dbReference type="GO" id="GO:0004359">
    <property type="term" value="F:glutaminase activity"/>
    <property type="evidence" value="ECO:0007669"/>
    <property type="project" value="UniProtKB-EC"/>
</dbReference>
<dbReference type="GO" id="GO:0000107">
    <property type="term" value="F:imidazoleglycerol-phosphate synthase activity"/>
    <property type="evidence" value="ECO:0007669"/>
    <property type="project" value="UniProtKB-UniRule"/>
</dbReference>
<dbReference type="GO" id="GO:0016829">
    <property type="term" value="F:lyase activity"/>
    <property type="evidence" value="ECO:0007669"/>
    <property type="project" value="UniProtKB-KW"/>
</dbReference>
<dbReference type="GO" id="GO:0000105">
    <property type="term" value="P:L-histidine biosynthetic process"/>
    <property type="evidence" value="ECO:0007669"/>
    <property type="project" value="UniProtKB-UniRule"/>
</dbReference>
<dbReference type="CDD" id="cd01748">
    <property type="entry name" value="GATase1_IGP_Synthase"/>
    <property type="match status" value="1"/>
</dbReference>
<dbReference type="FunFam" id="3.40.50.880:FF:000064">
    <property type="entry name" value="Imidazole glycerol phosphate synthase subunit HisH"/>
    <property type="match status" value="1"/>
</dbReference>
<dbReference type="Gene3D" id="3.40.50.880">
    <property type="match status" value="1"/>
</dbReference>
<dbReference type="HAMAP" id="MF_00278">
    <property type="entry name" value="HisH"/>
    <property type="match status" value="1"/>
</dbReference>
<dbReference type="InterPro" id="IPR029062">
    <property type="entry name" value="Class_I_gatase-like"/>
</dbReference>
<dbReference type="InterPro" id="IPR017926">
    <property type="entry name" value="GATASE"/>
</dbReference>
<dbReference type="InterPro" id="IPR010139">
    <property type="entry name" value="Imidazole-glycPsynth_HisH"/>
</dbReference>
<dbReference type="NCBIfam" id="TIGR01855">
    <property type="entry name" value="IMP_synth_hisH"/>
    <property type="match status" value="1"/>
</dbReference>
<dbReference type="PANTHER" id="PTHR42701">
    <property type="entry name" value="IMIDAZOLE GLYCEROL PHOSPHATE SYNTHASE SUBUNIT HISH"/>
    <property type="match status" value="1"/>
</dbReference>
<dbReference type="PANTHER" id="PTHR42701:SF1">
    <property type="entry name" value="IMIDAZOLE GLYCEROL PHOSPHATE SYNTHASE SUBUNIT HISH"/>
    <property type="match status" value="1"/>
</dbReference>
<dbReference type="Pfam" id="PF00117">
    <property type="entry name" value="GATase"/>
    <property type="match status" value="1"/>
</dbReference>
<dbReference type="PIRSF" id="PIRSF000495">
    <property type="entry name" value="Amidotransf_hisH"/>
    <property type="match status" value="1"/>
</dbReference>
<dbReference type="SUPFAM" id="SSF52317">
    <property type="entry name" value="Class I glutamine amidotransferase-like"/>
    <property type="match status" value="1"/>
</dbReference>
<dbReference type="PROSITE" id="PS51273">
    <property type="entry name" value="GATASE_TYPE_1"/>
    <property type="match status" value="1"/>
</dbReference>
<protein>
    <recommendedName>
        <fullName evidence="1">Imidazole glycerol phosphate synthase subunit HisH</fullName>
        <ecNumber evidence="1">4.3.2.10</ecNumber>
    </recommendedName>
    <alternativeName>
        <fullName evidence="1">IGP synthase glutaminase subunit</fullName>
        <ecNumber evidence="1">3.5.1.2</ecNumber>
    </alternativeName>
    <alternativeName>
        <fullName evidence="1">IGP synthase subunit HisH</fullName>
    </alternativeName>
    <alternativeName>
        <fullName evidence="1">ImGP synthase subunit HisH</fullName>
        <shortName evidence="1">IGPS subunit HisH</shortName>
    </alternativeName>
</protein>
<evidence type="ECO:0000255" key="1">
    <source>
        <dbReference type="HAMAP-Rule" id="MF_00278"/>
    </source>
</evidence>
<organism>
    <name type="scientific">Staphylococcus aureus (strain N315)</name>
    <dbReference type="NCBI Taxonomy" id="158879"/>
    <lineage>
        <taxon>Bacteria</taxon>
        <taxon>Bacillati</taxon>
        <taxon>Bacillota</taxon>
        <taxon>Bacilli</taxon>
        <taxon>Bacillales</taxon>
        <taxon>Staphylococcaceae</taxon>
        <taxon>Staphylococcus</taxon>
    </lineage>
</organism>
<keyword id="KW-0028">Amino-acid biosynthesis</keyword>
<keyword id="KW-0963">Cytoplasm</keyword>
<keyword id="KW-0315">Glutamine amidotransferase</keyword>
<keyword id="KW-0368">Histidine biosynthesis</keyword>
<keyword id="KW-0378">Hydrolase</keyword>
<keyword id="KW-0456">Lyase</keyword>
<proteinExistence type="inferred from homology"/>
<name>HIS5_STAAN</name>
<accession>P64364</accession>
<accession>Q99QW6</accession>
<feature type="chain" id="PRO_0000152424" description="Imidazole glycerol phosphate synthase subunit HisH">
    <location>
        <begin position="1"/>
        <end position="192"/>
    </location>
</feature>
<feature type="domain" description="Glutamine amidotransferase type-1" evidence="1">
    <location>
        <begin position="1"/>
        <end position="192"/>
    </location>
</feature>
<feature type="active site" description="Nucleophile" evidence="1">
    <location>
        <position position="77"/>
    </location>
</feature>
<feature type="active site" evidence="1">
    <location>
        <position position="169"/>
    </location>
</feature>
<feature type="active site" evidence="1">
    <location>
        <position position="171"/>
    </location>
</feature>
<comment type="function">
    <text evidence="1">IGPS catalyzes the conversion of PRFAR and glutamine to IGP, AICAR and glutamate. The HisH subunit catalyzes the hydrolysis of glutamine to glutamate and ammonia as part of the synthesis of IGP and AICAR. The resulting ammonia molecule is channeled to the active site of HisF.</text>
</comment>
<comment type="catalytic activity">
    <reaction evidence="1">
        <text>5-[(5-phospho-1-deoxy-D-ribulos-1-ylimino)methylamino]-1-(5-phospho-beta-D-ribosyl)imidazole-4-carboxamide + L-glutamine = D-erythro-1-(imidazol-4-yl)glycerol 3-phosphate + 5-amino-1-(5-phospho-beta-D-ribosyl)imidazole-4-carboxamide + L-glutamate + H(+)</text>
        <dbReference type="Rhea" id="RHEA:24793"/>
        <dbReference type="ChEBI" id="CHEBI:15378"/>
        <dbReference type="ChEBI" id="CHEBI:29985"/>
        <dbReference type="ChEBI" id="CHEBI:58278"/>
        <dbReference type="ChEBI" id="CHEBI:58359"/>
        <dbReference type="ChEBI" id="CHEBI:58475"/>
        <dbReference type="ChEBI" id="CHEBI:58525"/>
        <dbReference type="EC" id="4.3.2.10"/>
    </reaction>
</comment>
<comment type="catalytic activity">
    <reaction evidence="1">
        <text>L-glutamine + H2O = L-glutamate + NH4(+)</text>
        <dbReference type="Rhea" id="RHEA:15889"/>
        <dbReference type="ChEBI" id="CHEBI:15377"/>
        <dbReference type="ChEBI" id="CHEBI:28938"/>
        <dbReference type="ChEBI" id="CHEBI:29985"/>
        <dbReference type="ChEBI" id="CHEBI:58359"/>
        <dbReference type="EC" id="3.5.1.2"/>
    </reaction>
</comment>
<comment type="pathway">
    <text evidence="1">Amino-acid biosynthesis; L-histidine biosynthesis; L-histidine from 5-phospho-alpha-D-ribose 1-diphosphate: step 5/9.</text>
</comment>
<comment type="subunit">
    <text evidence="1">Heterodimer of HisH and HisF.</text>
</comment>
<comment type="subcellular location">
    <subcellularLocation>
        <location evidence="1">Cytoplasm</location>
    </subcellularLocation>
</comment>